<dbReference type="EMBL" id="CU329671">
    <property type="protein sequence ID" value="CAB50976.1"/>
    <property type="molecule type" value="Genomic_DNA"/>
</dbReference>
<dbReference type="PIR" id="T39290">
    <property type="entry name" value="T39290"/>
</dbReference>
<dbReference type="RefSeq" id="NP_596469.1">
    <property type="nucleotide sequence ID" value="NM_001022388.2"/>
</dbReference>
<dbReference type="BioGRID" id="276163">
    <property type="interactions" value="10"/>
</dbReference>
<dbReference type="PaxDb" id="4896-SPBC1105.13c.1"/>
<dbReference type="EnsemblFungi" id="SPBC1105.13c.1">
    <property type="protein sequence ID" value="SPBC1105.13c.1:pep"/>
    <property type="gene ID" value="SPBC1105.13c"/>
</dbReference>
<dbReference type="KEGG" id="spo:2539605"/>
<dbReference type="PomBase" id="SPBC1105.13c"/>
<dbReference type="VEuPathDB" id="FungiDB:SPBC1105.13c"/>
<dbReference type="HOGENOM" id="CLU_1816929_0_0_1"/>
<dbReference type="InParanoid" id="Q9Y816"/>
<dbReference type="PRO" id="PR:Q9Y816"/>
<dbReference type="Proteomes" id="UP000002485">
    <property type="component" value="Chromosome II"/>
</dbReference>
<dbReference type="GO" id="GO:0005737">
    <property type="term" value="C:cytoplasm"/>
    <property type="evidence" value="ECO:0007005"/>
    <property type="project" value="PomBase"/>
</dbReference>
<dbReference type="GO" id="GO:0005783">
    <property type="term" value="C:endoplasmic reticulum"/>
    <property type="evidence" value="ECO:0007005"/>
    <property type="project" value="PomBase"/>
</dbReference>
<reference key="1">
    <citation type="journal article" date="2002" name="Nature">
        <title>The genome sequence of Schizosaccharomyces pombe.</title>
        <authorList>
            <person name="Wood V."/>
            <person name="Gwilliam R."/>
            <person name="Rajandream M.A."/>
            <person name="Lyne M.H."/>
            <person name="Lyne R."/>
            <person name="Stewart A."/>
            <person name="Sgouros J.G."/>
            <person name="Peat N."/>
            <person name="Hayles J."/>
            <person name="Baker S.G."/>
            <person name="Basham D."/>
            <person name="Bowman S."/>
            <person name="Brooks K."/>
            <person name="Brown D."/>
            <person name="Brown S."/>
            <person name="Chillingworth T."/>
            <person name="Churcher C.M."/>
            <person name="Collins M."/>
            <person name="Connor R."/>
            <person name="Cronin A."/>
            <person name="Davis P."/>
            <person name="Feltwell T."/>
            <person name="Fraser A."/>
            <person name="Gentles S."/>
            <person name="Goble A."/>
            <person name="Hamlin N."/>
            <person name="Harris D.E."/>
            <person name="Hidalgo J."/>
            <person name="Hodgson G."/>
            <person name="Holroyd S."/>
            <person name="Hornsby T."/>
            <person name="Howarth S."/>
            <person name="Huckle E.J."/>
            <person name="Hunt S."/>
            <person name="Jagels K."/>
            <person name="James K.D."/>
            <person name="Jones L."/>
            <person name="Jones M."/>
            <person name="Leather S."/>
            <person name="McDonald S."/>
            <person name="McLean J."/>
            <person name="Mooney P."/>
            <person name="Moule S."/>
            <person name="Mungall K.L."/>
            <person name="Murphy L.D."/>
            <person name="Niblett D."/>
            <person name="Odell C."/>
            <person name="Oliver K."/>
            <person name="O'Neil S."/>
            <person name="Pearson D."/>
            <person name="Quail M.A."/>
            <person name="Rabbinowitsch E."/>
            <person name="Rutherford K.M."/>
            <person name="Rutter S."/>
            <person name="Saunders D."/>
            <person name="Seeger K."/>
            <person name="Sharp S."/>
            <person name="Skelton J."/>
            <person name="Simmonds M.N."/>
            <person name="Squares R."/>
            <person name="Squares S."/>
            <person name="Stevens K."/>
            <person name="Taylor K."/>
            <person name="Taylor R.G."/>
            <person name="Tivey A."/>
            <person name="Walsh S.V."/>
            <person name="Warren T."/>
            <person name="Whitehead S."/>
            <person name="Woodward J.R."/>
            <person name="Volckaert G."/>
            <person name="Aert R."/>
            <person name="Robben J."/>
            <person name="Grymonprez B."/>
            <person name="Weltjens I."/>
            <person name="Vanstreels E."/>
            <person name="Rieger M."/>
            <person name="Schaefer M."/>
            <person name="Mueller-Auer S."/>
            <person name="Gabel C."/>
            <person name="Fuchs M."/>
            <person name="Duesterhoeft A."/>
            <person name="Fritzc C."/>
            <person name="Holzer E."/>
            <person name="Moestl D."/>
            <person name="Hilbert H."/>
            <person name="Borzym K."/>
            <person name="Langer I."/>
            <person name="Beck A."/>
            <person name="Lehrach H."/>
            <person name="Reinhardt R."/>
            <person name="Pohl T.M."/>
            <person name="Eger P."/>
            <person name="Zimmermann W."/>
            <person name="Wedler H."/>
            <person name="Wambutt R."/>
            <person name="Purnelle B."/>
            <person name="Goffeau A."/>
            <person name="Cadieu E."/>
            <person name="Dreano S."/>
            <person name="Gloux S."/>
            <person name="Lelaure V."/>
            <person name="Mottier S."/>
            <person name="Galibert F."/>
            <person name="Aves S.J."/>
            <person name="Xiang Z."/>
            <person name="Hunt C."/>
            <person name="Moore K."/>
            <person name="Hurst S.M."/>
            <person name="Lucas M."/>
            <person name="Rochet M."/>
            <person name="Gaillardin C."/>
            <person name="Tallada V.A."/>
            <person name="Garzon A."/>
            <person name="Thode G."/>
            <person name="Daga R.R."/>
            <person name="Cruzado L."/>
            <person name="Jimenez J."/>
            <person name="Sanchez M."/>
            <person name="del Rey F."/>
            <person name="Benito J."/>
            <person name="Dominguez A."/>
            <person name="Revuelta J.L."/>
            <person name="Moreno S."/>
            <person name="Armstrong J."/>
            <person name="Forsburg S.L."/>
            <person name="Cerutti L."/>
            <person name="Lowe T."/>
            <person name="McCombie W.R."/>
            <person name="Paulsen I."/>
            <person name="Potashkin J."/>
            <person name="Shpakovski G.V."/>
            <person name="Ussery D."/>
            <person name="Barrell B.G."/>
            <person name="Nurse P."/>
        </authorList>
    </citation>
    <scope>NUCLEOTIDE SEQUENCE [LARGE SCALE GENOMIC DNA]</scope>
    <source>
        <strain>972 / ATCC 24843</strain>
    </source>
</reference>
<sequence length="142" mass="16309">MITEFIKSFLLFFFLPFFLSMPMIFATLGEFTDDQTHHYSTLPSCDLLLIRGEVKENARCFLHNPKISHQHHSFWSLIEGCLEALQFGLLAILQGLFSQFAWEACSCTFACMLLTSERTEPSYPFSEITEVSRGGLHFVKLN</sequence>
<organism>
    <name type="scientific">Schizosaccharomyces pombe (strain 972 / ATCC 24843)</name>
    <name type="common">Fission yeast</name>
    <dbReference type="NCBI Taxonomy" id="284812"/>
    <lineage>
        <taxon>Eukaryota</taxon>
        <taxon>Fungi</taxon>
        <taxon>Dikarya</taxon>
        <taxon>Ascomycota</taxon>
        <taxon>Taphrinomycotina</taxon>
        <taxon>Schizosaccharomycetes</taxon>
        <taxon>Schizosaccharomycetales</taxon>
        <taxon>Schizosaccharomycetaceae</taxon>
        <taxon>Schizosaccharomyces</taxon>
    </lineage>
</organism>
<keyword id="KW-1185">Reference proteome</keyword>
<keyword id="KW-0732">Signal</keyword>
<feature type="signal peptide" evidence="1">
    <location>
        <begin position="1"/>
        <end position="26"/>
    </location>
</feature>
<feature type="chain" id="PRO_0000014214" description="Uncharacterized protein C1105.13c">
    <location>
        <begin position="27"/>
        <end position="142"/>
    </location>
</feature>
<evidence type="ECO:0000255" key="1"/>
<proteinExistence type="inferred from homology"/>
<name>YOND_SCHPO</name>
<gene>
    <name type="ORF">SPBC1105.13c</name>
</gene>
<accession>Q9Y816</accession>
<protein>
    <recommendedName>
        <fullName>Uncharacterized protein C1105.13c</fullName>
    </recommendedName>
</protein>